<protein>
    <recommendedName>
        <fullName>Probable molt-inhibiting hormone</fullName>
        <shortName>MIH</shortName>
    </recommendedName>
</protein>
<organism evidence="3">
    <name type="scientific">Jasus lalandii</name>
    <name type="common">Cape rock lobster</name>
    <name type="synonym">Palinurus lalandii</name>
    <dbReference type="NCBI Taxonomy" id="99572"/>
    <lineage>
        <taxon>Eukaryota</taxon>
        <taxon>Metazoa</taxon>
        <taxon>Ecdysozoa</taxon>
        <taxon>Arthropoda</taxon>
        <taxon>Crustacea</taxon>
        <taxon>Multicrustacea</taxon>
        <taxon>Malacostraca</taxon>
        <taxon>Eumalacostraca</taxon>
        <taxon>Eucarida</taxon>
        <taxon>Decapoda</taxon>
        <taxon>Pleocyemata</taxon>
        <taxon>Achelata</taxon>
        <taxon>Palinuroidea</taxon>
        <taxon>Palinuridae</taxon>
        <taxon>Jasus</taxon>
    </lineage>
</organism>
<proteinExistence type="evidence at protein level"/>
<feature type="chain" id="PRO_0000209863" description="Probable molt-inhibiting hormone">
    <location>
        <begin position="1"/>
        <end position="74"/>
    </location>
</feature>
<feature type="modified residue" description="Alanine amide" evidence="2">
    <location>
        <position position="74"/>
    </location>
</feature>
<feature type="disulfide bond" evidence="1">
    <location>
        <begin position="6"/>
        <end position="43"/>
    </location>
</feature>
<feature type="disulfide bond" evidence="1">
    <location>
        <begin position="23"/>
        <end position="39"/>
    </location>
</feature>
<feature type="disulfide bond" evidence="1">
    <location>
        <begin position="26"/>
        <end position="52"/>
    </location>
</feature>
<sequence>RFTFDCPGMMGQRYLYEQVEQVCDDCYNLYREEKIAVNCRENCFLNSWFTVCLQATMREHETPRFDIWRSILKA</sequence>
<evidence type="ECO:0000250" key="1"/>
<evidence type="ECO:0000269" key="2">
    <source>
    </source>
</evidence>
<evidence type="ECO:0000305" key="3"/>
<dbReference type="SMR" id="P83220"/>
<dbReference type="GO" id="GO:0005576">
    <property type="term" value="C:extracellular region"/>
    <property type="evidence" value="ECO:0007669"/>
    <property type="project" value="UniProtKB-SubCell"/>
</dbReference>
<dbReference type="GO" id="GO:0005184">
    <property type="term" value="F:neuropeptide hormone activity"/>
    <property type="evidence" value="ECO:0007669"/>
    <property type="project" value="InterPro"/>
</dbReference>
<dbReference type="GO" id="GO:0007623">
    <property type="term" value="P:circadian rhythm"/>
    <property type="evidence" value="ECO:0007669"/>
    <property type="project" value="TreeGrafter"/>
</dbReference>
<dbReference type="GO" id="GO:0007218">
    <property type="term" value="P:neuropeptide signaling pathway"/>
    <property type="evidence" value="ECO:0007669"/>
    <property type="project" value="UniProtKB-KW"/>
</dbReference>
<dbReference type="Gene3D" id="1.10.2010.10">
    <property type="entry name" value="Crustacean CHH/MIH/GIH neurohormone"/>
    <property type="match status" value="1"/>
</dbReference>
<dbReference type="InterPro" id="IPR018251">
    <property type="entry name" value="Crust_neurhormone_CS"/>
</dbReference>
<dbReference type="InterPro" id="IPR031098">
    <property type="entry name" value="Crust_neurohorm"/>
</dbReference>
<dbReference type="InterPro" id="IPR035957">
    <property type="entry name" value="Crust_neurohorm_sf"/>
</dbReference>
<dbReference type="InterPro" id="IPR001166">
    <property type="entry name" value="Hyperglycemic"/>
</dbReference>
<dbReference type="InterPro" id="IPR001262">
    <property type="entry name" value="Hyperglycemic2"/>
</dbReference>
<dbReference type="PANTHER" id="PTHR35981">
    <property type="entry name" value="ION TRANSPORT PEPTIDE, ISOFORM C"/>
    <property type="match status" value="1"/>
</dbReference>
<dbReference type="PANTHER" id="PTHR35981:SF2">
    <property type="entry name" value="ION TRANSPORT PEPTIDE, ISOFORM C"/>
    <property type="match status" value="1"/>
</dbReference>
<dbReference type="Pfam" id="PF01147">
    <property type="entry name" value="Crust_neurohorm"/>
    <property type="match status" value="1"/>
</dbReference>
<dbReference type="PRINTS" id="PR00549">
    <property type="entry name" value="HYPRGLYCEMC2"/>
</dbReference>
<dbReference type="PRINTS" id="PR00550">
    <property type="entry name" value="HYPRGLYCEMIC"/>
</dbReference>
<dbReference type="SUPFAM" id="SSF81778">
    <property type="entry name" value="Crustacean CHH/MIH/GIH neurohormone"/>
    <property type="match status" value="1"/>
</dbReference>
<dbReference type="PROSITE" id="PS01250">
    <property type="entry name" value="CHH_MIH_GIH"/>
    <property type="match status" value="1"/>
</dbReference>
<keyword id="KW-0027">Amidation</keyword>
<keyword id="KW-0903">Direct protein sequencing</keyword>
<keyword id="KW-1015">Disulfide bond</keyword>
<keyword id="KW-0372">Hormone</keyword>
<keyword id="KW-0527">Neuropeptide</keyword>
<keyword id="KW-0964">Secreted</keyword>
<accession>P83220</accession>
<comment type="function">
    <text evidence="2">Inhibits Y-organs where molting hormone (ecdysteroid) is secreted. A molting cycle is initiated when MIH secretion diminishes or stops. Has little or no hyperglycemic activity.</text>
</comment>
<comment type="subcellular location">
    <subcellularLocation>
        <location>Secreted</location>
    </subcellularLocation>
</comment>
<comment type="mass spectrometry"/>
<comment type="similarity">
    <text evidence="3">Belongs to the arthropod CHH/MIH/GIH/VIH hormone family.</text>
</comment>
<name>MIH_JASLA</name>
<reference evidence="3" key="1">
    <citation type="journal article" date="2000" name="Peptides">
        <title>Characterization and sequence elucidation of a novel peptide with molt-inhibiting activity from the South African spiny lobster, Jasus lalandii.</title>
        <authorList>
            <person name="Marco H.G."/>
            <person name="Stoeva S."/>
            <person name="Voelter W."/>
            <person name="Gaede G."/>
        </authorList>
    </citation>
    <scope>PROTEIN SEQUENCE</scope>
    <scope>FUNCTION</scope>
    <scope>MASS SPECTROMETRY</scope>
    <scope>AMIDATION AT ALA-74</scope>
    <source>
        <tissue>Sinus gland</tissue>
    </source>
</reference>